<sequence>MAVKRMWGGRFEATGAKWVEEFGASISFDQQMAAEDLEGSLAHVTMLKETKILPAADADQIITGLKKLQDQLEAGELTFTVENEDIHMNLEALLTEEIGPVAGKLHTARSRNDQVATDLHLYVKHRLPHVIQAIKDLQKVLVEKAAANVETIMPGYTHLQHAQPISYGHYLMAYFQMLQRDVERFEFNQQHTDLMPLGAAALAGTTFPIDRELTAKLLDFQAPYANSLDAVSDRDFVLEFLANAAILMTHLSRLCEEIIMWCSYEFGYLELSDQYSTGSSIMPQKKNPDMAELVRGKTGRVNGHLLGLLTTIKGLPLAYNKDLQEDKEGLFDAVKTIMPSLKVVAGMLETAHVNKEKMAQATERDFSNATELADYLATKGIPFRQAHAIVGQLVLEGLKTGTTLQEIPLAKYQEIDPAIGEDVYHDLQSKVAVERRNSLGGTGFDQVKAQIEAAKQLLSK</sequence>
<organism>
    <name type="scientific">Limosilactobacillus fermentum (strain NBRC 3956 / LMG 18251)</name>
    <name type="common">Lactobacillus fermentum</name>
    <dbReference type="NCBI Taxonomy" id="334390"/>
    <lineage>
        <taxon>Bacteria</taxon>
        <taxon>Bacillati</taxon>
        <taxon>Bacillota</taxon>
        <taxon>Bacilli</taxon>
        <taxon>Lactobacillales</taxon>
        <taxon>Lactobacillaceae</taxon>
        <taxon>Limosilactobacillus</taxon>
    </lineage>
</organism>
<accession>B2GE78</accession>
<protein>
    <recommendedName>
        <fullName evidence="1">Argininosuccinate lyase</fullName>
        <shortName evidence="1">ASAL</shortName>
        <ecNumber evidence="1">4.3.2.1</ecNumber>
    </recommendedName>
    <alternativeName>
        <fullName evidence="1">Arginosuccinase</fullName>
    </alternativeName>
</protein>
<reference key="1">
    <citation type="journal article" date="2008" name="DNA Res.">
        <title>Comparative genome analysis of Lactobacillus reuteri and Lactobacillus fermentum reveal a genomic island for reuterin and cobalamin production.</title>
        <authorList>
            <person name="Morita H."/>
            <person name="Toh H."/>
            <person name="Fukuda S."/>
            <person name="Horikawa H."/>
            <person name="Oshima K."/>
            <person name="Suzuki T."/>
            <person name="Murakami M."/>
            <person name="Hisamatsu S."/>
            <person name="Kato Y."/>
            <person name="Takizawa T."/>
            <person name="Fukuoka H."/>
            <person name="Yoshimura T."/>
            <person name="Itoh K."/>
            <person name="O'Sullivan D.J."/>
            <person name="McKay L.L."/>
            <person name="Ohno H."/>
            <person name="Kikuchi J."/>
            <person name="Masaoka T."/>
            <person name="Hattori M."/>
        </authorList>
    </citation>
    <scope>NUCLEOTIDE SEQUENCE [LARGE SCALE GENOMIC DNA]</scope>
    <source>
        <strain>NBRC 3956 / LMG 18251</strain>
    </source>
</reference>
<keyword id="KW-0028">Amino-acid biosynthesis</keyword>
<keyword id="KW-0055">Arginine biosynthesis</keyword>
<keyword id="KW-0963">Cytoplasm</keyword>
<keyword id="KW-0456">Lyase</keyword>
<keyword id="KW-1185">Reference proteome</keyword>
<proteinExistence type="inferred from homology"/>
<dbReference type="EC" id="4.3.2.1" evidence="1"/>
<dbReference type="EMBL" id="AP008937">
    <property type="protein sequence ID" value="BAG27960.1"/>
    <property type="molecule type" value="Genomic_DNA"/>
</dbReference>
<dbReference type="RefSeq" id="WP_012391669.1">
    <property type="nucleotide sequence ID" value="NC_010610.1"/>
</dbReference>
<dbReference type="SMR" id="B2GE78"/>
<dbReference type="KEGG" id="lfe:LAF_1624"/>
<dbReference type="eggNOG" id="COG0165">
    <property type="taxonomic scope" value="Bacteria"/>
</dbReference>
<dbReference type="HOGENOM" id="CLU_027272_2_3_9"/>
<dbReference type="UniPathway" id="UPA00068">
    <property type="reaction ID" value="UER00114"/>
</dbReference>
<dbReference type="Proteomes" id="UP000001697">
    <property type="component" value="Chromosome"/>
</dbReference>
<dbReference type="GO" id="GO:0005829">
    <property type="term" value="C:cytosol"/>
    <property type="evidence" value="ECO:0007669"/>
    <property type="project" value="TreeGrafter"/>
</dbReference>
<dbReference type="GO" id="GO:0004056">
    <property type="term" value="F:argininosuccinate lyase activity"/>
    <property type="evidence" value="ECO:0007669"/>
    <property type="project" value="UniProtKB-UniRule"/>
</dbReference>
<dbReference type="GO" id="GO:0042450">
    <property type="term" value="P:arginine biosynthetic process via ornithine"/>
    <property type="evidence" value="ECO:0007669"/>
    <property type="project" value="InterPro"/>
</dbReference>
<dbReference type="GO" id="GO:0006526">
    <property type="term" value="P:L-arginine biosynthetic process"/>
    <property type="evidence" value="ECO:0007669"/>
    <property type="project" value="UniProtKB-UniRule"/>
</dbReference>
<dbReference type="CDD" id="cd01359">
    <property type="entry name" value="Argininosuccinate_lyase"/>
    <property type="match status" value="1"/>
</dbReference>
<dbReference type="FunFam" id="1.10.275.10:FF:000002">
    <property type="entry name" value="Argininosuccinate lyase"/>
    <property type="match status" value="1"/>
</dbReference>
<dbReference type="FunFam" id="1.10.40.30:FF:000001">
    <property type="entry name" value="Argininosuccinate lyase"/>
    <property type="match status" value="1"/>
</dbReference>
<dbReference type="FunFam" id="1.20.200.10:FF:000002">
    <property type="entry name" value="Argininosuccinate lyase"/>
    <property type="match status" value="1"/>
</dbReference>
<dbReference type="Gene3D" id="1.10.40.30">
    <property type="entry name" value="Fumarase/aspartase (C-terminal domain)"/>
    <property type="match status" value="1"/>
</dbReference>
<dbReference type="Gene3D" id="1.20.200.10">
    <property type="entry name" value="Fumarase/aspartase (Central domain)"/>
    <property type="match status" value="1"/>
</dbReference>
<dbReference type="Gene3D" id="1.10.275.10">
    <property type="entry name" value="Fumarase/aspartase (N-terminal domain)"/>
    <property type="match status" value="1"/>
</dbReference>
<dbReference type="HAMAP" id="MF_00006">
    <property type="entry name" value="Arg_succ_lyase"/>
    <property type="match status" value="1"/>
</dbReference>
<dbReference type="InterPro" id="IPR029419">
    <property type="entry name" value="Arg_succ_lyase_C"/>
</dbReference>
<dbReference type="InterPro" id="IPR009049">
    <property type="entry name" value="Argininosuccinate_lyase"/>
</dbReference>
<dbReference type="InterPro" id="IPR024083">
    <property type="entry name" value="Fumarase/histidase_N"/>
</dbReference>
<dbReference type="InterPro" id="IPR020557">
    <property type="entry name" value="Fumarate_lyase_CS"/>
</dbReference>
<dbReference type="InterPro" id="IPR000362">
    <property type="entry name" value="Fumarate_lyase_fam"/>
</dbReference>
<dbReference type="InterPro" id="IPR022761">
    <property type="entry name" value="Fumarate_lyase_N"/>
</dbReference>
<dbReference type="InterPro" id="IPR008948">
    <property type="entry name" value="L-Aspartase-like"/>
</dbReference>
<dbReference type="NCBIfam" id="TIGR00838">
    <property type="entry name" value="argH"/>
    <property type="match status" value="1"/>
</dbReference>
<dbReference type="PANTHER" id="PTHR43814">
    <property type="entry name" value="ARGININOSUCCINATE LYASE"/>
    <property type="match status" value="1"/>
</dbReference>
<dbReference type="PANTHER" id="PTHR43814:SF1">
    <property type="entry name" value="ARGININOSUCCINATE LYASE"/>
    <property type="match status" value="1"/>
</dbReference>
<dbReference type="Pfam" id="PF14698">
    <property type="entry name" value="ASL_C2"/>
    <property type="match status" value="1"/>
</dbReference>
<dbReference type="Pfam" id="PF00206">
    <property type="entry name" value="Lyase_1"/>
    <property type="match status" value="1"/>
</dbReference>
<dbReference type="PRINTS" id="PR00145">
    <property type="entry name" value="ARGSUCLYASE"/>
</dbReference>
<dbReference type="PRINTS" id="PR00149">
    <property type="entry name" value="FUMRATELYASE"/>
</dbReference>
<dbReference type="SUPFAM" id="SSF48557">
    <property type="entry name" value="L-aspartase-like"/>
    <property type="match status" value="1"/>
</dbReference>
<dbReference type="PROSITE" id="PS00163">
    <property type="entry name" value="FUMARATE_LYASES"/>
    <property type="match status" value="1"/>
</dbReference>
<name>ARLY_LIMF3</name>
<gene>
    <name evidence="1" type="primary">argH</name>
    <name type="ordered locus">LAF_1624</name>
</gene>
<evidence type="ECO:0000255" key="1">
    <source>
        <dbReference type="HAMAP-Rule" id="MF_00006"/>
    </source>
</evidence>
<comment type="catalytic activity">
    <reaction evidence="1">
        <text>2-(N(omega)-L-arginino)succinate = fumarate + L-arginine</text>
        <dbReference type="Rhea" id="RHEA:24020"/>
        <dbReference type="ChEBI" id="CHEBI:29806"/>
        <dbReference type="ChEBI" id="CHEBI:32682"/>
        <dbReference type="ChEBI" id="CHEBI:57472"/>
        <dbReference type="EC" id="4.3.2.1"/>
    </reaction>
</comment>
<comment type="pathway">
    <text evidence="1">Amino-acid biosynthesis; L-arginine biosynthesis; L-arginine from L-ornithine and carbamoyl phosphate: step 3/3.</text>
</comment>
<comment type="subcellular location">
    <subcellularLocation>
        <location evidence="1">Cytoplasm</location>
    </subcellularLocation>
</comment>
<comment type="similarity">
    <text evidence="1">Belongs to the lyase 1 family. Argininosuccinate lyase subfamily.</text>
</comment>
<feature type="chain" id="PRO_1000089088" description="Argininosuccinate lyase">
    <location>
        <begin position="1"/>
        <end position="460"/>
    </location>
</feature>